<reference key="1">
    <citation type="submission" date="1994-09" db="EMBL/GenBank/DDBJ databases">
        <title>Isolation and characterization of two rice genes encoding a putative tumor suppressor.</title>
        <authorList>
            <person name="Kim J.K."/>
        </authorList>
    </citation>
    <scope>NUCLEOTIDE SEQUENCE [MRNA]</scope>
    <source>
        <strain>cv. IR36</strain>
    </source>
</reference>
<reference key="2">
    <citation type="journal article" date="2005" name="PLoS Biol.">
        <title>The genomes of Oryza sativa: a history of duplications.</title>
        <authorList>
            <person name="Yu J."/>
            <person name="Wang J."/>
            <person name="Lin W."/>
            <person name="Li S."/>
            <person name="Li H."/>
            <person name="Zhou J."/>
            <person name="Ni P."/>
            <person name="Dong W."/>
            <person name="Hu S."/>
            <person name="Zeng C."/>
            <person name="Zhang J."/>
            <person name="Zhang Y."/>
            <person name="Li R."/>
            <person name="Xu Z."/>
            <person name="Li S."/>
            <person name="Li X."/>
            <person name="Zheng H."/>
            <person name="Cong L."/>
            <person name="Lin L."/>
            <person name="Yin J."/>
            <person name="Geng J."/>
            <person name="Li G."/>
            <person name="Shi J."/>
            <person name="Liu J."/>
            <person name="Lv H."/>
            <person name="Li J."/>
            <person name="Wang J."/>
            <person name="Deng Y."/>
            <person name="Ran L."/>
            <person name="Shi X."/>
            <person name="Wang X."/>
            <person name="Wu Q."/>
            <person name="Li C."/>
            <person name="Ren X."/>
            <person name="Wang J."/>
            <person name="Wang X."/>
            <person name="Li D."/>
            <person name="Liu D."/>
            <person name="Zhang X."/>
            <person name="Ji Z."/>
            <person name="Zhao W."/>
            <person name="Sun Y."/>
            <person name="Zhang Z."/>
            <person name="Bao J."/>
            <person name="Han Y."/>
            <person name="Dong L."/>
            <person name="Ji J."/>
            <person name="Chen P."/>
            <person name="Wu S."/>
            <person name="Liu J."/>
            <person name="Xiao Y."/>
            <person name="Bu D."/>
            <person name="Tan J."/>
            <person name="Yang L."/>
            <person name="Ye C."/>
            <person name="Zhang J."/>
            <person name="Xu J."/>
            <person name="Zhou Y."/>
            <person name="Yu Y."/>
            <person name="Zhang B."/>
            <person name="Zhuang S."/>
            <person name="Wei H."/>
            <person name="Liu B."/>
            <person name="Lei M."/>
            <person name="Yu H."/>
            <person name="Li Y."/>
            <person name="Xu H."/>
            <person name="Wei S."/>
            <person name="He X."/>
            <person name="Fang L."/>
            <person name="Zhang Z."/>
            <person name="Zhang Y."/>
            <person name="Huang X."/>
            <person name="Su Z."/>
            <person name="Tong W."/>
            <person name="Li J."/>
            <person name="Tong Z."/>
            <person name="Li S."/>
            <person name="Ye J."/>
            <person name="Wang L."/>
            <person name="Fang L."/>
            <person name="Lei T."/>
            <person name="Chen C.-S."/>
            <person name="Chen H.-C."/>
            <person name="Xu Z."/>
            <person name="Li H."/>
            <person name="Huang H."/>
            <person name="Zhang F."/>
            <person name="Xu H."/>
            <person name="Li N."/>
            <person name="Zhao C."/>
            <person name="Li S."/>
            <person name="Dong L."/>
            <person name="Huang Y."/>
            <person name="Li L."/>
            <person name="Xi Y."/>
            <person name="Qi Q."/>
            <person name="Li W."/>
            <person name="Zhang B."/>
            <person name="Hu W."/>
            <person name="Zhang Y."/>
            <person name="Tian X."/>
            <person name="Jiao Y."/>
            <person name="Liang X."/>
            <person name="Jin J."/>
            <person name="Gao L."/>
            <person name="Zheng W."/>
            <person name="Hao B."/>
            <person name="Liu S.-M."/>
            <person name="Wang W."/>
            <person name="Yuan L."/>
            <person name="Cao M."/>
            <person name="McDermott J."/>
            <person name="Samudrala R."/>
            <person name="Wang J."/>
            <person name="Wong G.K.-S."/>
            <person name="Yang H."/>
        </authorList>
    </citation>
    <scope>NUCLEOTIDE SEQUENCE [LARGE SCALE GENOMIC DNA]</scope>
    <source>
        <strain>cv. 93-11</strain>
    </source>
</reference>
<reference key="3">
    <citation type="thesis" date="1996" institute="Fudan University" country="China">
        <title>Isolation and Characterization of a rice QM gene, tumor suppressor or development regulator.</title>
        <authorList>
            <person name="Zong H."/>
            <person name="Jiang Y."/>
            <person name="Cao K."/>
        </authorList>
    </citation>
    <scope>NUCLEOTIDE SEQUENCE [MRNA] OF 52-224</scope>
    <source>
        <strain>cv. Guang-Lu-Ai No.4</strain>
        <tissue>Seedling</tissue>
    </source>
</reference>
<comment type="subunit">
    <text evidence="1">Component of the small ribosomal subunit. Mature ribosomes consist of a small (40S) and a large (60S) subunit. The 40S subunit contains about 33 different proteins and 1 molecule of RNA (18S). The 60S subunit contains about 49 different proteins and 3 molecules of RNA (25S, 5.8S and 5S) (By similarity).</text>
</comment>
<comment type="similarity">
    <text evidence="2">Belongs to the universal ribosomal protein uL16 family.</text>
</comment>
<comment type="sequence caution" evidence="2">
    <conflict type="frameshift">
        <sequence resource="EMBL-CDS" id="CAA57339"/>
    </conflict>
</comment>
<organism>
    <name type="scientific">Oryza sativa subsp. indica</name>
    <name type="common">Rice</name>
    <dbReference type="NCBI Taxonomy" id="39946"/>
    <lineage>
        <taxon>Eukaryota</taxon>
        <taxon>Viridiplantae</taxon>
        <taxon>Streptophyta</taxon>
        <taxon>Embryophyta</taxon>
        <taxon>Tracheophyta</taxon>
        <taxon>Spermatophyta</taxon>
        <taxon>Magnoliopsida</taxon>
        <taxon>Liliopsida</taxon>
        <taxon>Poales</taxon>
        <taxon>Poaceae</taxon>
        <taxon>BOP clade</taxon>
        <taxon>Oryzoideae</taxon>
        <taxon>Oryzeae</taxon>
        <taxon>Oryzinae</taxon>
        <taxon>Oryza</taxon>
        <taxon>Oryza sativa</taxon>
    </lineage>
</organism>
<proteinExistence type="evidence at transcript level"/>
<gene>
    <name type="primary">SC34</name>
    <name type="ORF">OsI_034350</name>
</gene>
<name>RL101_ORYSI</name>
<evidence type="ECO:0000250" key="1"/>
<evidence type="ECO:0000305" key="2"/>
<protein>
    <recommendedName>
        <fullName evidence="2">Large ribosomal subunit protein uL16z</fullName>
    </recommendedName>
    <alternativeName>
        <fullName>60S ribosomal protein L10-1</fullName>
    </alternativeName>
    <alternativeName>
        <fullName>Protein QM</fullName>
    </alternativeName>
    <alternativeName>
        <fullName>Putative tumor suppressor SC34</fullName>
    </alternativeName>
</protein>
<feature type="chain" id="PRO_0000302053" description="Large ribosomal subunit protein uL16z">
    <location>
        <begin position="1"/>
        <end position="224"/>
    </location>
</feature>
<feature type="sequence conflict" description="In Ref. 1; CAA57339." evidence="2" ref="1">
    <original>F</original>
    <variation>V</variation>
    <location>
        <position position="94"/>
    </location>
</feature>
<feature type="sequence conflict" description="In Ref. 1; CAA57339." evidence="2" ref="1">
    <original>Q</original>
    <variation>K</variation>
    <location>
        <position position="198"/>
    </location>
</feature>
<feature type="sequence conflict" description="In Ref. 2; EAY80391." evidence="2" ref="2">
    <original>R</original>
    <variation>L</variation>
    <location>
        <position position="205"/>
    </location>
</feature>
<feature type="sequence conflict" description="In Ref. 1; CAA57339." evidence="2" ref="1">
    <original>A</original>
    <variation>R</variation>
    <location>
        <position position="222"/>
    </location>
</feature>
<accession>A2ZCQ7</accession>
<accession>P45635</accession>
<accession>Q2R8Q3</accession>
<accession>Q40650</accession>
<dbReference type="EMBL" id="X81691">
    <property type="protein sequence ID" value="CAA57339.1"/>
    <property type="status" value="ALT_FRAME"/>
    <property type="molecule type" value="mRNA"/>
</dbReference>
<dbReference type="EMBL" id="CM000136">
    <property type="protein sequence ID" value="EAY80391.1"/>
    <property type="molecule type" value="Genomic_DNA"/>
</dbReference>
<dbReference type="EMBL" id="U55212">
    <property type="protein sequence ID" value="AAA99158.1"/>
    <property type="molecule type" value="mRNA"/>
</dbReference>
<dbReference type="PIR" id="S49575">
    <property type="entry name" value="S49575"/>
</dbReference>
<dbReference type="SMR" id="A2ZCQ7"/>
<dbReference type="STRING" id="39946.A2ZCQ7"/>
<dbReference type="iPTMnet" id="A2ZCQ7"/>
<dbReference type="HOGENOM" id="CLU_084051_0_0_1"/>
<dbReference type="Proteomes" id="UP000007015">
    <property type="component" value="Chromosome 11"/>
</dbReference>
<dbReference type="GO" id="GO:1990904">
    <property type="term" value="C:ribonucleoprotein complex"/>
    <property type="evidence" value="ECO:0007669"/>
    <property type="project" value="UniProtKB-KW"/>
</dbReference>
<dbReference type="GO" id="GO:0005840">
    <property type="term" value="C:ribosome"/>
    <property type="evidence" value="ECO:0007669"/>
    <property type="project" value="UniProtKB-KW"/>
</dbReference>
<dbReference type="GO" id="GO:0003735">
    <property type="term" value="F:structural constituent of ribosome"/>
    <property type="evidence" value="ECO:0007669"/>
    <property type="project" value="InterPro"/>
</dbReference>
<dbReference type="GO" id="GO:0006412">
    <property type="term" value="P:translation"/>
    <property type="evidence" value="ECO:0007669"/>
    <property type="project" value="InterPro"/>
</dbReference>
<dbReference type="CDD" id="cd01433">
    <property type="entry name" value="Ribosomal_L16_L10e"/>
    <property type="match status" value="1"/>
</dbReference>
<dbReference type="FunFam" id="3.90.1170.10:FF:000002">
    <property type="entry name" value="60S ribosomal protein L10"/>
    <property type="match status" value="1"/>
</dbReference>
<dbReference type="Gene3D" id="3.90.1170.10">
    <property type="entry name" value="Ribosomal protein L10e/L16"/>
    <property type="match status" value="1"/>
</dbReference>
<dbReference type="InterPro" id="IPR047873">
    <property type="entry name" value="Ribosomal_uL16"/>
</dbReference>
<dbReference type="InterPro" id="IPR018255">
    <property type="entry name" value="Ribosomal_uL16_CS_euk_arc"/>
</dbReference>
<dbReference type="InterPro" id="IPR016180">
    <property type="entry name" value="Ribosomal_uL16_dom"/>
</dbReference>
<dbReference type="InterPro" id="IPR001197">
    <property type="entry name" value="Ribosomal_uL16_euk_arch"/>
</dbReference>
<dbReference type="InterPro" id="IPR036920">
    <property type="entry name" value="Ribosomal_uL16_sf"/>
</dbReference>
<dbReference type="NCBIfam" id="NF003239">
    <property type="entry name" value="PRK04199.1-4"/>
    <property type="match status" value="1"/>
</dbReference>
<dbReference type="NCBIfam" id="TIGR00279">
    <property type="entry name" value="uL16_euk_arch"/>
    <property type="match status" value="1"/>
</dbReference>
<dbReference type="PANTHER" id="PTHR11726">
    <property type="entry name" value="60S RIBOSOMAL PROTEIN L10"/>
    <property type="match status" value="1"/>
</dbReference>
<dbReference type="Pfam" id="PF00252">
    <property type="entry name" value="Ribosomal_L16"/>
    <property type="match status" value="1"/>
</dbReference>
<dbReference type="PIRSF" id="PIRSF005590">
    <property type="entry name" value="Ribosomal_L10"/>
    <property type="match status" value="1"/>
</dbReference>
<dbReference type="SUPFAM" id="SSF54686">
    <property type="entry name" value="Ribosomal protein L16p/L10e"/>
    <property type="match status" value="1"/>
</dbReference>
<dbReference type="PROSITE" id="PS01257">
    <property type="entry name" value="RIBOSOMAL_L10E"/>
    <property type="match status" value="1"/>
</dbReference>
<sequence length="224" mass="25347">MGRRPARCYRQIKNKPYPKSRYCRGVPDPKIRIYDVGMKKKGVDEFPYCVHLVSWEKENVSSEALEAARIACNKYMTKNAGKDAFHLRVRVHPFHVLRINKMLSCAGADRLQTGMRGAFGKPQGTCARVDIGQVLLSVRCKESNAKHAEEALRRAKFKFPGRQKIIHSRKWGFTKFTREEYVKLKAEGRIMSDGVNAQLLGSHGRLAKRAPGKAFLAETIQASA</sequence>
<keyword id="KW-1185">Reference proteome</keyword>
<keyword id="KW-0687">Ribonucleoprotein</keyword>
<keyword id="KW-0689">Ribosomal protein</keyword>